<keyword id="KW-0240">DNA-directed RNA polymerase</keyword>
<keyword id="KW-0548">Nucleotidyltransferase</keyword>
<keyword id="KW-0804">Transcription</keyword>
<keyword id="KW-0808">Transferase</keyword>
<name>RPOA_ONYPE</name>
<protein>
    <recommendedName>
        <fullName evidence="1">DNA-directed RNA polymerase subunit alpha</fullName>
        <shortName evidence="1">RNAP subunit alpha</shortName>
        <ecNumber evidence="1">2.7.7.6</ecNumber>
    </recommendedName>
    <alternativeName>
        <fullName evidence="1">RNA polymerase subunit alpha</fullName>
    </alternativeName>
    <alternativeName>
        <fullName evidence="1">Transcriptase subunit alpha</fullName>
    </alternativeName>
</protein>
<feature type="chain" id="PRO_0000296845" description="DNA-directed RNA polymerase subunit alpha">
    <location>
        <begin position="1"/>
        <end position="330"/>
    </location>
</feature>
<feature type="region of interest" description="Alpha N-terminal domain (alpha-NTD)" evidence="1">
    <location>
        <begin position="1"/>
        <end position="229"/>
    </location>
</feature>
<feature type="region of interest" description="Alpha C-terminal domain (alpha-CTD)" evidence="1">
    <location>
        <begin position="245"/>
        <end position="330"/>
    </location>
</feature>
<sequence>MKNIKFIKPFFVEEIDENPISGKFIIKPLERGYGITVGNALRRVLLSSLPGTAIVNVKIQGVEQEFTTIPGVYEDVMTIILNLKKIVFAVDDESDDFEEKLELIAKGPQRLTASSFELPAGVKIINPDHYITTLSDDVCFHMTVTLKKGIGYVGAKDNKVHGENQVGVIAIDSLFTPVVNVSYQVEKKLGNKDELTIEITTNGALLAKEALATAASILVDHFNVLVELSQKPAHVEFVSESKKEAHNSVLDLEIEQLDLSVRLFNSLKRAGIDTVAALVKLSEKEVVKLKSLGRKSFQELKDKFLEYGLEFNDYLKEVLHHSVEEDKDKH</sequence>
<proteinExistence type="inferred from homology"/>
<organism>
    <name type="scientific">Onion yellows phytoplasma (strain OY-M)</name>
    <dbReference type="NCBI Taxonomy" id="262768"/>
    <lineage>
        <taxon>Bacteria</taxon>
        <taxon>Bacillati</taxon>
        <taxon>Mycoplasmatota</taxon>
        <taxon>Mollicutes</taxon>
        <taxon>Acholeplasmatales</taxon>
        <taxon>Acholeplasmataceae</taxon>
        <taxon>Candidatus Phytoplasma</taxon>
        <taxon>16SrI (Aster yellows group)</taxon>
    </lineage>
</organism>
<gene>
    <name evidence="1" type="primary">rpoA</name>
    <name type="ordered locus">PAM_227</name>
</gene>
<evidence type="ECO:0000255" key="1">
    <source>
        <dbReference type="HAMAP-Rule" id="MF_00059"/>
    </source>
</evidence>
<evidence type="ECO:0000305" key="2"/>
<reference key="1">
    <citation type="journal article" date="2004" name="Nat. Genet.">
        <title>Reductive evolution suggested from the complete genome sequence of a plant-pathogenic phytoplasma.</title>
        <authorList>
            <person name="Oshima K."/>
            <person name="Kakizawa S."/>
            <person name="Nishigawa H."/>
            <person name="Jung H.-Y."/>
            <person name="Wei W."/>
            <person name="Suzuki S."/>
            <person name="Arashida R."/>
            <person name="Nakata D."/>
            <person name="Miyata S."/>
            <person name="Ugaki M."/>
            <person name="Namba S."/>
        </authorList>
    </citation>
    <scope>NUCLEOTIDE SEQUENCE [LARGE SCALE GENOMIC DNA]</scope>
    <source>
        <strain>OY-M</strain>
    </source>
</reference>
<comment type="function">
    <text evidence="1">DNA-dependent RNA polymerase catalyzes the transcription of DNA into RNA using the four ribonucleoside triphosphates as substrates.</text>
</comment>
<comment type="catalytic activity">
    <reaction evidence="1">
        <text>RNA(n) + a ribonucleoside 5'-triphosphate = RNA(n+1) + diphosphate</text>
        <dbReference type="Rhea" id="RHEA:21248"/>
        <dbReference type="Rhea" id="RHEA-COMP:14527"/>
        <dbReference type="Rhea" id="RHEA-COMP:17342"/>
        <dbReference type="ChEBI" id="CHEBI:33019"/>
        <dbReference type="ChEBI" id="CHEBI:61557"/>
        <dbReference type="ChEBI" id="CHEBI:140395"/>
        <dbReference type="EC" id="2.7.7.6"/>
    </reaction>
</comment>
<comment type="subunit">
    <text evidence="1">Homodimer. The RNAP catalytic core consists of 2 alpha, 1 beta, 1 beta' and 1 omega subunit. When a sigma factor is associated with the core the holoenzyme is formed, which can initiate transcription.</text>
</comment>
<comment type="domain">
    <text evidence="1">The N-terminal domain is essential for RNAP assembly and basal transcription, whereas the C-terminal domain is involved in interaction with transcriptional regulators and with upstream promoter elements.</text>
</comment>
<comment type="similarity">
    <text evidence="1">Belongs to the RNA polymerase alpha chain family.</text>
</comment>
<comment type="sequence caution" evidence="2">
    <conflict type="frameshift">
        <sequence resource="EMBL-CDS" id="BAD04312"/>
    </conflict>
</comment>
<dbReference type="EC" id="2.7.7.6" evidence="1"/>
<dbReference type="EMBL" id="AP006628">
    <property type="protein sequence ID" value="BAD04312.1"/>
    <property type="status" value="ALT_FRAME"/>
    <property type="molecule type" value="Genomic_DNA"/>
</dbReference>
<dbReference type="SMR" id="Q6YQZ5"/>
<dbReference type="STRING" id="262768.PAM_227"/>
<dbReference type="KEGG" id="poy:PAM_227"/>
<dbReference type="eggNOG" id="COG0202">
    <property type="taxonomic scope" value="Bacteria"/>
</dbReference>
<dbReference type="HOGENOM" id="CLU_053084_0_1_14"/>
<dbReference type="Proteomes" id="UP000002523">
    <property type="component" value="Chromosome"/>
</dbReference>
<dbReference type="GO" id="GO:0005737">
    <property type="term" value="C:cytoplasm"/>
    <property type="evidence" value="ECO:0007669"/>
    <property type="project" value="UniProtKB-ARBA"/>
</dbReference>
<dbReference type="GO" id="GO:0000428">
    <property type="term" value="C:DNA-directed RNA polymerase complex"/>
    <property type="evidence" value="ECO:0007669"/>
    <property type="project" value="UniProtKB-KW"/>
</dbReference>
<dbReference type="GO" id="GO:0003677">
    <property type="term" value="F:DNA binding"/>
    <property type="evidence" value="ECO:0007669"/>
    <property type="project" value="UniProtKB-UniRule"/>
</dbReference>
<dbReference type="GO" id="GO:0003899">
    <property type="term" value="F:DNA-directed RNA polymerase activity"/>
    <property type="evidence" value="ECO:0007669"/>
    <property type="project" value="UniProtKB-UniRule"/>
</dbReference>
<dbReference type="GO" id="GO:0046983">
    <property type="term" value="F:protein dimerization activity"/>
    <property type="evidence" value="ECO:0007669"/>
    <property type="project" value="InterPro"/>
</dbReference>
<dbReference type="GO" id="GO:0006351">
    <property type="term" value="P:DNA-templated transcription"/>
    <property type="evidence" value="ECO:0007669"/>
    <property type="project" value="UniProtKB-UniRule"/>
</dbReference>
<dbReference type="CDD" id="cd06928">
    <property type="entry name" value="RNAP_alpha_NTD"/>
    <property type="match status" value="1"/>
</dbReference>
<dbReference type="FunFam" id="2.170.120.12:FF:000001">
    <property type="entry name" value="DNA-directed RNA polymerase subunit alpha"/>
    <property type="match status" value="1"/>
</dbReference>
<dbReference type="Gene3D" id="1.10.150.20">
    <property type="entry name" value="5' to 3' exonuclease, C-terminal subdomain"/>
    <property type="match status" value="1"/>
</dbReference>
<dbReference type="Gene3D" id="2.170.120.12">
    <property type="entry name" value="DNA-directed RNA polymerase, insert domain"/>
    <property type="match status" value="1"/>
</dbReference>
<dbReference type="Gene3D" id="3.30.1360.10">
    <property type="entry name" value="RNA polymerase, RBP11-like subunit"/>
    <property type="match status" value="1"/>
</dbReference>
<dbReference type="HAMAP" id="MF_00059">
    <property type="entry name" value="RNApol_bact_RpoA"/>
    <property type="match status" value="1"/>
</dbReference>
<dbReference type="InterPro" id="IPR011262">
    <property type="entry name" value="DNA-dir_RNA_pol_insert"/>
</dbReference>
<dbReference type="InterPro" id="IPR011263">
    <property type="entry name" value="DNA-dir_RNA_pol_RpoA/D/Rpb3"/>
</dbReference>
<dbReference type="InterPro" id="IPR011773">
    <property type="entry name" value="DNA-dir_RpoA"/>
</dbReference>
<dbReference type="InterPro" id="IPR036603">
    <property type="entry name" value="RBP11-like"/>
</dbReference>
<dbReference type="InterPro" id="IPR011260">
    <property type="entry name" value="RNAP_asu_C"/>
</dbReference>
<dbReference type="InterPro" id="IPR036643">
    <property type="entry name" value="RNApol_insert_sf"/>
</dbReference>
<dbReference type="NCBIfam" id="NF003519">
    <property type="entry name" value="PRK05182.2-5"/>
    <property type="match status" value="1"/>
</dbReference>
<dbReference type="NCBIfam" id="TIGR02027">
    <property type="entry name" value="rpoA"/>
    <property type="match status" value="1"/>
</dbReference>
<dbReference type="Pfam" id="PF01000">
    <property type="entry name" value="RNA_pol_A_bac"/>
    <property type="match status" value="1"/>
</dbReference>
<dbReference type="Pfam" id="PF03118">
    <property type="entry name" value="RNA_pol_A_CTD"/>
    <property type="match status" value="1"/>
</dbReference>
<dbReference type="Pfam" id="PF01193">
    <property type="entry name" value="RNA_pol_L"/>
    <property type="match status" value="1"/>
</dbReference>
<dbReference type="SMART" id="SM00662">
    <property type="entry name" value="RPOLD"/>
    <property type="match status" value="1"/>
</dbReference>
<dbReference type="SUPFAM" id="SSF47789">
    <property type="entry name" value="C-terminal domain of RNA polymerase alpha subunit"/>
    <property type="match status" value="1"/>
</dbReference>
<dbReference type="SUPFAM" id="SSF56553">
    <property type="entry name" value="Insert subdomain of RNA polymerase alpha subunit"/>
    <property type="match status" value="1"/>
</dbReference>
<dbReference type="SUPFAM" id="SSF55257">
    <property type="entry name" value="RBP11-like subunits of RNA polymerase"/>
    <property type="match status" value="1"/>
</dbReference>
<accession>Q6YQZ5</accession>